<accession>Q63H61</accession>
<sequence length="293" mass="32688">MEITFQKVEHRYQYKTPFERRALYDVDVSFPSGGYYAIIGHTGSGKSTMIQHLNGLLQPTNGTVQIGEHFISAGKKEKKLKLLRKKVGVVFQFPEHQLFEETVEKDICFGPTNFGVSEEAAKQKAREAIELVGLEPDLLARSPFELSGGQMRRVAIAGVLAMEPEVLVLDEPTAGLDPKGQNELMEMFYKLHKEKGLTVILVTHNMEDAAKYAEQIIVMHKGTVFLQGSAEEVFSHADELEKIGVDLPMSLKYKRAIEEKFGISIPKATLSLEDLTHEVVQVLRKGGHESCSS</sequence>
<dbReference type="EC" id="7.-.-.-" evidence="1"/>
<dbReference type="EMBL" id="CP000001">
    <property type="protein sequence ID" value="AAU20100.1"/>
    <property type="molecule type" value="Genomic_DNA"/>
</dbReference>
<dbReference type="RefSeq" id="WP_000406510.1">
    <property type="nucleotide sequence ID" value="NC_006274.1"/>
</dbReference>
<dbReference type="SMR" id="Q63H61"/>
<dbReference type="KEGG" id="bcz:BCE33L0133"/>
<dbReference type="PATRIC" id="fig|288681.22.peg.17"/>
<dbReference type="Proteomes" id="UP000002612">
    <property type="component" value="Chromosome"/>
</dbReference>
<dbReference type="GO" id="GO:0043190">
    <property type="term" value="C:ATP-binding cassette (ABC) transporter complex"/>
    <property type="evidence" value="ECO:0007669"/>
    <property type="project" value="TreeGrafter"/>
</dbReference>
<dbReference type="GO" id="GO:0005524">
    <property type="term" value="F:ATP binding"/>
    <property type="evidence" value="ECO:0007669"/>
    <property type="project" value="UniProtKB-KW"/>
</dbReference>
<dbReference type="GO" id="GO:0016887">
    <property type="term" value="F:ATP hydrolysis activity"/>
    <property type="evidence" value="ECO:0007669"/>
    <property type="project" value="InterPro"/>
</dbReference>
<dbReference type="GO" id="GO:0042626">
    <property type="term" value="F:ATPase-coupled transmembrane transporter activity"/>
    <property type="evidence" value="ECO:0007669"/>
    <property type="project" value="TreeGrafter"/>
</dbReference>
<dbReference type="CDD" id="cd03225">
    <property type="entry name" value="ABC_cobalt_CbiO_domain1"/>
    <property type="match status" value="1"/>
</dbReference>
<dbReference type="FunFam" id="3.40.50.300:FF:000224">
    <property type="entry name" value="Energy-coupling factor transporter ATP-binding protein EcfA"/>
    <property type="match status" value="1"/>
</dbReference>
<dbReference type="Gene3D" id="3.40.50.300">
    <property type="entry name" value="P-loop containing nucleotide triphosphate hydrolases"/>
    <property type="match status" value="1"/>
</dbReference>
<dbReference type="InterPro" id="IPR003593">
    <property type="entry name" value="AAA+_ATPase"/>
</dbReference>
<dbReference type="InterPro" id="IPR003439">
    <property type="entry name" value="ABC_transporter-like_ATP-bd"/>
</dbReference>
<dbReference type="InterPro" id="IPR017871">
    <property type="entry name" value="ABC_transporter-like_CS"/>
</dbReference>
<dbReference type="InterPro" id="IPR015856">
    <property type="entry name" value="ABC_transpr_CbiO/EcfA_su"/>
</dbReference>
<dbReference type="InterPro" id="IPR050095">
    <property type="entry name" value="ECF_ABC_transporter_ATP-bd"/>
</dbReference>
<dbReference type="InterPro" id="IPR030946">
    <property type="entry name" value="EcfA2"/>
</dbReference>
<dbReference type="InterPro" id="IPR027417">
    <property type="entry name" value="P-loop_NTPase"/>
</dbReference>
<dbReference type="NCBIfam" id="TIGR04521">
    <property type="entry name" value="ECF_ATPase_2"/>
    <property type="match status" value="1"/>
</dbReference>
<dbReference type="NCBIfam" id="NF010155">
    <property type="entry name" value="PRK13634.1"/>
    <property type="match status" value="1"/>
</dbReference>
<dbReference type="PANTHER" id="PTHR43553:SF27">
    <property type="entry name" value="ENERGY-COUPLING FACTOR TRANSPORTER ATP-BINDING PROTEIN ECFA2"/>
    <property type="match status" value="1"/>
</dbReference>
<dbReference type="PANTHER" id="PTHR43553">
    <property type="entry name" value="HEAVY METAL TRANSPORTER"/>
    <property type="match status" value="1"/>
</dbReference>
<dbReference type="Pfam" id="PF00005">
    <property type="entry name" value="ABC_tran"/>
    <property type="match status" value="1"/>
</dbReference>
<dbReference type="SMART" id="SM00382">
    <property type="entry name" value="AAA"/>
    <property type="match status" value="1"/>
</dbReference>
<dbReference type="SUPFAM" id="SSF52540">
    <property type="entry name" value="P-loop containing nucleoside triphosphate hydrolases"/>
    <property type="match status" value="1"/>
</dbReference>
<dbReference type="PROSITE" id="PS00211">
    <property type="entry name" value="ABC_TRANSPORTER_1"/>
    <property type="match status" value="1"/>
</dbReference>
<dbReference type="PROSITE" id="PS50893">
    <property type="entry name" value="ABC_TRANSPORTER_2"/>
    <property type="match status" value="1"/>
</dbReference>
<dbReference type="PROSITE" id="PS51246">
    <property type="entry name" value="CBIO"/>
    <property type="match status" value="1"/>
</dbReference>
<reference key="1">
    <citation type="journal article" date="2006" name="J. Bacteriol.">
        <title>Pathogenomic sequence analysis of Bacillus cereus and Bacillus thuringiensis isolates closely related to Bacillus anthracis.</title>
        <authorList>
            <person name="Han C.S."/>
            <person name="Xie G."/>
            <person name="Challacombe J.F."/>
            <person name="Altherr M.R."/>
            <person name="Bhotika S.S."/>
            <person name="Bruce D."/>
            <person name="Campbell C.S."/>
            <person name="Campbell M.L."/>
            <person name="Chen J."/>
            <person name="Chertkov O."/>
            <person name="Cleland C."/>
            <person name="Dimitrijevic M."/>
            <person name="Doggett N.A."/>
            <person name="Fawcett J.J."/>
            <person name="Glavina T."/>
            <person name="Goodwin L.A."/>
            <person name="Hill K.K."/>
            <person name="Hitchcock P."/>
            <person name="Jackson P.J."/>
            <person name="Keim P."/>
            <person name="Kewalramani A.R."/>
            <person name="Longmire J."/>
            <person name="Lucas S."/>
            <person name="Malfatti S."/>
            <person name="McMurry K."/>
            <person name="Meincke L.J."/>
            <person name="Misra M."/>
            <person name="Moseman B.L."/>
            <person name="Mundt M."/>
            <person name="Munk A.C."/>
            <person name="Okinaka R.T."/>
            <person name="Parson-Quintana B."/>
            <person name="Reilly L.P."/>
            <person name="Richardson P."/>
            <person name="Robinson D.L."/>
            <person name="Rubin E."/>
            <person name="Saunders E."/>
            <person name="Tapia R."/>
            <person name="Tesmer J.G."/>
            <person name="Thayer N."/>
            <person name="Thompson L.S."/>
            <person name="Tice H."/>
            <person name="Ticknor L.O."/>
            <person name="Wills P.L."/>
            <person name="Brettin T.S."/>
            <person name="Gilna P."/>
        </authorList>
    </citation>
    <scope>NUCLEOTIDE SEQUENCE [LARGE SCALE GENOMIC DNA]</scope>
    <source>
        <strain>ZK / E33L</strain>
    </source>
</reference>
<comment type="function">
    <text evidence="1">ATP-binding (A) component of a common energy-coupling factor (ECF) ABC-transporter complex. Unlike classic ABC transporters this ECF transporter provides the energy necessary to transport a number of different substrates.</text>
</comment>
<comment type="subunit">
    <text evidence="1">Forms a stable energy-coupling factor (ECF) transporter complex composed of 2 membrane-embedded substrate-binding proteins (S component), 2 ATP-binding proteins (A component) and 2 transmembrane proteins (T component).</text>
</comment>
<comment type="subcellular location">
    <subcellularLocation>
        <location evidence="1">Cell membrane</location>
        <topology evidence="1">Peripheral membrane protein</topology>
    </subcellularLocation>
</comment>
<comment type="similarity">
    <text evidence="1">Belongs to the ABC transporter superfamily. Energy-coupling factor EcfA family.</text>
</comment>
<evidence type="ECO:0000255" key="1">
    <source>
        <dbReference type="HAMAP-Rule" id="MF_01710"/>
    </source>
</evidence>
<protein>
    <recommendedName>
        <fullName evidence="1">Energy-coupling factor transporter ATP-binding protein EcfA2</fullName>
        <shortName evidence="1">ECF transporter A component EcfA2</shortName>
        <ecNumber evidence="1">7.-.-.-</ecNumber>
    </recommendedName>
</protein>
<gene>
    <name evidence="1" type="primary">ecfA2</name>
    <name type="synonym">cbiO2</name>
    <name type="ordered locus">BCE33L0133</name>
</gene>
<feature type="chain" id="PRO_0000287922" description="Energy-coupling factor transporter ATP-binding protein EcfA2">
    <location>
        <begin position="1"/>
        <end position="293"/>
    </location>
</feature>
<feature type="domain" description="ABC transporter" evidence="1">
    <location>
        <begin position="3"/>
        <end position="246"/>
    </location>
</feature>
<feature type="binding site" evidence="1">
    <location>
        <begin position="40"/>
        <end position="47"/>
    </location>
    <ligand>
        <name>ATP</name>
        <dbReference type="ChEBI" id="CHEBI:30616"/>
    </ligand>
</feature>
<organism>
    <name type="scientific">Bacillus cereus (strain ZK / E33L)</name>
    <dbReference type="NCBI Taxonomy" id="288681"/>
    <lineage>
        <taxon>Bacteria</taxon>
        <taxon>Bacillati</taxon>
        <taxon>Bacillota</taxon>
        <taxon>Bacilli</taxon>
        <taxon>Bacillales</taxon>
        <taxon>Bacillaceae</taxon>
        <taxon>Bacillus</taxon>
        <taxon>Bacillus cereus group</taxon>
    </lineage>
</organism>
<proteinExistence type="inferred from homology"/>
<keyword id="KW-0067">ATP-binding</keyword>
<keyword id="KW-1003">Cell membrane</keyword>
<keyword id="KW-0472">Membrane</keyword>
<keyword id="KW-0547">Nucleotide-binding</keyword>
<keyword id="KW-1278">Translocase</keyword>
<keyword id="KW-0813">Transport</keyword>
<name>ECFA2_BACCZ</name>